<accession>Q9AAY5</accession>
<dbReference type="EC" id="3.5.4.19" evidence="1"/>
<dbReference type="EMBL" id="AE005673">
    <property type="protein sequence ID" value="AAK22444.1"/>
    <property type="molecule type" value="Genomic_DNA"/>
</dbReference>
<dbReference type="PIR" id="H87305">
    <property type="entry name" value="H87305"/>
</dbReference>
<dbReference type="RefSeq" id="NP_419276.1">
    <property type="nucleotide sequence ID" value="NC_002696.2"/>
</dbReference>
<dbReference type="RefSeq" id="WP_010918345.1">
    <property type="nucleotide sequence ID" value="NC_002696.2"/>
</dbReference>
<dbReference type="SMR" id="Q9AAY5"/>
<dbReference type="STRING" id="190650.CC_0457"/>
<dbReference type="EnsemblBacteria" id="AAK22444">
    <property type="protein sequence ID" value="AAK22444"/>
    <property type="gene ID" value="CC_0457"/>
</dbReference>
<dbReference type="KEGG" id="ccr:CC_0457"/>
<dbReference type="PATRIC" id="fig|190650.5.peg.463"/>
<dbReference type="eggNOG" id="COG0139">
    <property type="taxonomic scope" value="Bacteria"/>
</dbReference>
<dbReference type="HOGENOM" id="CLU_048577_5_0_5"/>
<dbReference type="BioCyc" id="CAULO:CC0457-MONOMER"/>
<dbReference type="UniPathway" id="UPA00031">
    <property type="reaction ID" value="UER00008"/>
</dbReference>
<dbReference type="Proteomes" id="UP000001816">
    <property type="component" value="Chromosome"/>
</dbReference>
<dbReference type="GO" id="GO:0005737">
    <property type="term" value="C:cytoplasm"/>
    <property type="evidence" value="ECO:0007669"/>
    <property type="project" value="UniProtKB-SubCell"/>
</dbReference>
<dbReference type="GO" id="GO:0000287">
    <property type="term" value="F:magnesium ion binding"/>
    <property type="evidence" value="ECO:0007669"/>
    <property type="project" value="UniProtKB-UniRule"/>
</dbReference>
<dbReference type="GO" id="GO:0004635">
    <property type="term" value="F:phosphoribosyl-AMP cyclohydrolase activity"/>
    <property type="evidence" value="ECO:0007669"/>
    <property type="project" value="UniProtKB-UniRule"/>
</dbReference>
<dbReference type="GO" id="GO:0008270">
    <property type="term" value="F:zinc ion binding"/>
    <property type="evidence" value="ECO:0007669"/>
    <property type="project" value="UniProtKB-UniRule"/>
</dbReference>
<dbReference type="GO" id="GO:0000105">
    <property type="term" value="P:L-histidine biosynthetic process"/>
    <property type="evidence" value="ECO:0007669"/>
    <property type="project" value="UniProtKB-UniRule"/>
</dbReference>
<dbReference type="FunFam" id="3.10.20.810:FF:000001">
    <property type="entry name" value="Histidine biosynthesis bifunctional protein HisIE"/>
    <property type="match status" value="1"/>
</dbReference>
<dbReference type="Gene3D" id="3.10.20.810">
    <property type="entry name" value="Phosphoribosyl-AMP cyclohydrolase"/>
    <property type="match status" value="1"/>
</dbReference>
<dbReference type="HAMAP" id="MF_01021">
    <property type="entry name" value="HisI"/>
    <property type="match status" value="1"/>
</dbReference>
<dbReference type="InterPro" id="IPR026660">
    <property type="entry name" value="PRA-CH"/>
</dbReference>
<dbReference type="InterPro" id="IPR002496">
    <property type="entry name" value="PRib_AMP_CycHydrolase_dom"/>
</dbReference>
<dbReference type="InterPro" id="IPR038019">
    <property type="entry name" value="PRib_AMP_CycHydrolase_sf"/>
</dbReference>
<dbReference type="NCBIfam" id="NF000768">
    <property type="entry name" value="PRK00051.1"/>
    <property type="match status" value="1"/>
</dbReference>
<dbReference type="PANTHER" id="PTHR42945">
    <property type="entry name" value="HISTIDINE BIOSYNTHESIS BIFUNCTIONAL PROTEIN"/>
    <property type="match status" value="1"/>
</dbReference>
<dbReference type="PANTHER" id="PTHR42945:SF1">
    <property type="entry name" value="HISTIDINE BIOSYNTHESIS BIFUNCTIONAL PROTEIN HIS7"/>
    <property type="match status" value="1"/>
</dbReference>
<dbReference type="Pfam" id="PF01502">
    <property type="entry name" value="PRA-CH"/>
    <property type="match status" value="1"/>
</dbReference>
<dbReference type="SUPFAM" id="SSF141734">
    <property type="entry name" value="HisI-like"/>
    <property type="match status" value="1"/>
</dbReference>
<protein>
    <recommendedName>
        <fullName evidence="1">Phosphoribosyl-AMP cyclohydrolase</fullName>
        <shortName evidence="1">PRA-CH</shortName>
        <ecNumber evidence="1">3.5.4.19</ecNumber>
    </recommendedName>
</protein>
<evidence type="ECO:0000255" key="1">
    <source>
        <dbReference type="HAMAP-Rule" id="MF_01021"/>
    </source>
</evidence>
<proteinExistence type="inferred from homology"/>
<organism>
    <name type="scientific">Caulobacter vibrioides (strain ATCC 19089 / CIP 103742 / CB 15)</name>
    <name type="common">Caulobacter crescentus</name>
    <dbReference type="NCBI Taxonomy" id="190650"/>
    <lineage>
        <taxon>Bacteria</taxon>
        <taxon>Pseudomonadati</taxon>
        <taxon>Pseudomonadota</taxon>
        <taxon>Alphaproteobacteria</taxon>
        <taxon>Caulobacterales</taxon>
        <taxon>Caulobacteraceae</taxon>
        <taxon>Caulobacter</taxon>
    </lineage>
</organism>
<name>HIS3_CAUVC</name>
<comment type="function">
    <text evidence="1">Catalyzes the hydrolysis of the adenine ring of phosphoribosyl-AMP.</text>
</comment>
<comment type="catalytic activity">
    <reaction evidence="1">
        <text>1-(5-phospho-beta-D-ribosyl)-5'-AMP + H2O = 1-(5-phospho-beta-D-ribosyl)-5-[(5-phospho-beta-D-ribosylamino)methylideneamino]imidazole-4-carboxamide</text>
        <dbReference type="Rhea" id="RHEA:20049"/>
        <dbReference type="ChEBI" id="CHEBI:15377"/>
        <dbReference type="ChEBI" id="CHEBI:58435"/>
        <dbReference type="ChEBI" id="CHEBI:59457"/>
        <dbReference type="EC" id="3.5.4.19"/>
    </reaction>
</comment>
<comment type="cofactor">
    <cofactor evidence="1">
        <name>Mg(2+)</name>
        <dbReference type="ChEBI" id="CHEBI:18420"/>
    </cofactor>
    <text evidence="1">Binds 1 Mg(2+) ion per subunit.</text>
</comment>
<comment type="cofactor">
    <cofactor evidence="1">
        <name>Zn(2+)</name>
        <dbReference type="ChEBI" id="CHEBI:29105"/>
    </cofactor>
    <text evidence="1">Binds 1 zinc ion per subunit.</text>
</comment>
<comment type="pathway">
    <text evidence="1">Amino-acid biosynthesis; L-histidine biosynthesis; L-histidine from 5-phospho-alpha-D-ribose 1-diphosphate: step 3/9.</text>
</comment>
<comment type="subunit">
    <text evidence="1">Homodimer.</text>
</comment>
<comment type="subcellular location">
    <subcellularLocation>
        <location evidence="1">Cytoplasm</location>
    </subcellularLocation>
</comment>
<comment type="similarity">
    <text evidence="1">Belongs to the PRA-CH family.</text>
</comment>
<gene>
    <name evidence="1" type="primary">hisI</name>
    <name type="ordered locus">CC_0457</name>
</gene>
<keyword id="KW-0028">Amino-acid biosynthesis</keyword>
<keyword id="KW-0963">Cytoplasm</keyword>
<keyword id="KW-0368">Histidine biosynthesis</keyword>
<keyword id="KW-0378">Hydrolase</keyword>
<keyword id="KW-0460">Magnesium</keyword>
<keyword id="KW-0479">Metal-binding</keyword>
<keyword id="KW-1185">Reference proteome</keyword>
<keyword id="KW-0862">Zinc</keyword>
<feature type="chain" id="PRO_0000136469" description="Phosphoribosyl-AMP cyclohydrolase">
    <location>
        <begin position="1"/>
        <end position="139"/>
    </location>
</feature>
<feature type="binding site" evidence="1">
    <location>
        <position position="92"/>
    </location>
    <ligand>
        <name>Mg(2+)</name>
        <dbReference type="ChEBI" id="CHEBI:18420"/>
    </ligand>
</feature>
<feature type="binding site" evidence="1">
    <location>
        <position position="93"/>
    </location>
    <ligand>
        <name>Zn(2+)</name>
        <dbReference type="ChEBI" id="CHEBI:29105"/>
        <note>ligand shared between dimeric partners</note>
    </ligand>
</feature>
<feature type="binding site" evidence="1">
    <location>
        <position position="94"/>
    </location>
    <ligand>
        <name>Mg(2+)</name>
        <dbReference type="ChEBI" id="CHEBI:18420"/>
    </ligand>
</feature>
<feature type="binding site" evidence="1">
    <location>
        <position position="96"/>
    </location>
    <ligand>
        <name>Mg(2+)</name>
        <dbReference type="ChEBI" id="CHEBI:18420"/>
    </ligand>
</feature>
<feature type="binding site" evidence="1">
    <location>
        <position position="111"/>
    </location>
    <ligand>
        <name>Zn(2+)</name>
        <dbReference type="ChEBI" id="CHEBI:29105"/>
        <note>ligand shared between dimeric partners</note>
    </ligand>
</feature>
<feature type="binding site" evidence="1">
    <location>
        <position position="118"/>
    </location>
    <ligand>
        <name>Zn(2+)</name>
        <dbReference type="ChEBI" id="CHEBI:29105"/>
        <note>ligand shared between dimeric partners</note>
    </ligand>
</feature>
<sequence>MSTDLFPQAHSKHDLERGFALAPRFNADGLVVAVAQHADTGEILMLAWMNAEALKLTVETQIAHYFSRSRNELWKKGDTSGQLQDVVELRVDCDQDAVLLKVRPRGDGGACHVGFRSCFYRVLENGVLVEREAPLHDHA</sequence>
<reference key="1">
    <citation type="journal article" date="2001" name="Proc. Natl. Acad. Sci. U.S.A.">
        <title>Complete genome sequence of Caulobacter crescentus.</title>
        <authorList>
            <person name="Nierman W.C."/>
            <person name="Feldblyum T.V."/>
            <person name="Laub M.T."/>
            <person name="Paulsen I.T."/>
            <person name="Nelson K.E."/>
            <person name="Eisen J.A."/>
            <person name="Heidelberg J.F."/>
            <person name="Alley M.R.K."/>
            <person name="Ohta N."/>
            <person name="Maddock J.R."/>
            <person name="Potocka I."/>
            <person name="Nelson W.C."/>
            <person name="Newton A."/>
            <person name="Stephens C."/>
            <person name="Phadke N.D."/>
            <person name="Ely B."/>
            <person name="DeBoy R.T."/>
            <person name="Dodson R.J."/>
            <person name="Durkin A.S."/>
            <person name="Gwinn M.L."/>
            <person name="Haft D.H."/>
            <person name="Kolonay J.F."/>
            <person name="Smit J."/>
            <person name="Craven M.B."/>
            <person name="Khouri H.M."/>
            <person name="Shetty J."/>
            <person name="Berry K.J."/>
            <person name="Utterback T.R."/>
            <person name="Tran K."/>
            <person name="Wolf A.M."/>
            <person name="Vamathevan J.J."/>
            <person name="Ermolaeva M.D."/>
            <person name="White O."/>
            <person name="Salzberg S.L."/>
            <person name="Venter J.C."/>
            <person name="Shapiro L."/>
            <person name="Fraser C.M."/>
        </authorList>
    </citation>
    <scope>NUCLEOTIDE SEQUENCE [LARGE SCALE GENOMIC DNA]</scope>
    <source>
        <strain>ATCC 19089 / CIP 103742 / CB 15</strain>
    </source>
</reference>